<organism>
    <name type="scientific">Klebsiella pneumoniae subsp. pneumoniae (strain ATCC 700721 / MGH 78578)</name>
    <dbReference type="NCBI Taxonomy" id="272620"/>
    <lineage>
        <taxon>Bacteria</taxon>
        <taxon>Pseudomonadati</taxon>
        <taxon>Pseudomonadota</taxon>
        <taxon>Gammaproteobacteria</taxon>
        <taxon>Enterobacterales</taxon>
        <taxon>Enterobacteriaceae</taxon>
        <taxon>Klebsiella/Raoultella group</taxon>
        <taxon>Klebsiella</taxon>
        <taxon>Klebsiella pneumoniae complex</taxon>
    </lineage>
</organism>
<name>LPXC_KLEP7</name>
<sequence>MIKQRTLKRIVQATGVGLHTGKKVTLTLRPAPANTGVIYRRTDLNPPVDFPADAKSVRDTMLCTCLVNEHDVRISTVEHLNAALAGLGIDNIIVEVDAPEIPIMDGSAAPFVYLLLDAGIDELNCAKKFVRIKETVRVEDGDKWAEFKPYNGFSLDFTIDFNHPAIDASTQRYTLNFSADAFMRQISRARTFGFMRDIEYLQSRGLCLGGSFDCAIVVDDYRVLNEDGLRFEDEFVRHKMLDAIGDLFMCGHNIIGAFTAYKSGHALNNKLLQAVLAKQEAWEYVTFEDDAKLPMAFRAPSMVLA</sequence>
<keyword id="KW-0378">Hydrolase</keyword>
<keyword id="KW-0441">Lipid A biosynthesis</keyword>
<keyword id="KW-0444">Lipid biosynthesis</keyword>
<keyword id="KW-0443">Lipid metabolism</keyword>
<keyword id="KW-0479">Metal-binding</keyword>
<keyword id="KW-0862">Zinc</keyword>
<feature type="chain" id="PRO_1000013211" description="UDP-3-O-acyl-N-acetylglucosamine deacetylase">
    <location>
        <begin position="1"/>
        <end position="305"/>
    </location>
</feature>
<feature type="active site" description="Proton donor" evidence="1">
    <location>
        <position position="265"/>
    </location>
</feature>
<feature type="binding site" evidence="1">
    <location>
        <position position="79"/>
    </location>
    <ligand>
        <name>Zn(2+)</name>
        <dbReference type="ChEBI" id="CHEBI:29105"/>
    </ligand>
</feature>
<feature type="binding site" evidence="1">
    <location>
        <position position="238"/>
    </location>
    <ligand>
        <name>Zn(2+)</name>
        <dbReference type="ChEBI" id="CHEBI:29105"/>
    </ligand>
</feature>
<feature type="binding site" evidence="1">
    <location>
        <position position="242"/>
    </location>
    <ligand>
        <name>Zn(2+)</name>
        <dbReference type="ChEBI" id="CHEBI:29105"/>
    </ligand>
</feature>
<dbReference type="EC" id="3.5.1.108" evidence="1"/>
<dbReference type="EMBL" id="CP000647">
    <property type="protein sequence ID" value="ABR75560.1"/>
    <property type="molecule type" value="Genomic_DNA"/>
</dbReference>
<dbReference type="RefSeq" id="WP_002888632.1">
    <property type="nucleotide sequence ID" value="NC_009648.1"/>
</dbReference>
<dbReference type="SMR" id="A6T4N9"/>
<dbReference type="STRING" id="272620.KPN_00100"/>
<dbReference type="BindingDB" id="A6T4N9"/>
<dbReference type="PaxDb" id="272620-KPN_00100"/>
<dbReference type="EnsemblBacteria" id="ABR75560">
    <property type="protein sequence ID" value="ABR75560"/>
    <property type="gene ID" value="KPN_00100"/>
</dbReference>
<dbReference type="GeneID" id="93275008"/>
<dbReference type="KEGG" id="kpn:KPN_00100"/>
<dbReference type="HOGENOM" id="CLU_046528_1_0_6"/>
<dbReference type="UniPathway" id="UPA00359">
    <property type="reaction ID" value="UER00478"/>
</dbReference>
<dbReference type="Proteomes" id="UP000000265">
    <property type="component" value="Chromosome"/>
</dbReference>
<dbReference type="GO" id="GO:0016020">
    <property type="term" value="C:membrane"/>
    <property type="evidence" value="ECO:0007669"/>
    <property type="project" value="GOC"/>
</dbReference>
<dbReference type="GO" id="GO:0046872">
    <property type="term" value="F:metal ion binding"/>
    <property type="evidence" value="ECO:0007669"/>
    <property type="project" value="UniProtKB-KW"/>
</dbReference>
<dbReference type="GO" id="GO:0103117">
    <property type="term" value="F:UDP-3-O-acyl-N-acetylglucosamine deacetylase activity"/>
    <property type="evidence" value="ECO:0007669"/>
    <property type="project" value="UniProtKB-UniRule"/>
</dbReference>
<dbReference type="GO" id="GO:0009245">
    <property type="term" value="P:lipid A biosynthetic process"/>
    <property type="evidence" value="ECO:0007669"/>
    <property type="project" value="UniProtKB-UniRule"/>
</dbReference>
<dbReference type="FunFam" id="3.30.1700.10:FF:000001">
    <property type="entry name" value="UDP-3-O-acyl-N-acetylglucosamine deacetylase"/>
    <property type="match status" value="1"/>
</dbReference>
<dbReference type="FunFam" id="3.30.230.20:FF:000001">
    <property type="entry name" value="UDP-3-O-acyl-N-acetylglucosamine deacetylase"/>
    <property type="match status" value="1"/>
</dbReference>
<dbReference type="Gene3D" id="3.30.230.20">
    <property type="entry name" value="lpxc deacetylase, domain 1"/>
    <property type="match status" value="1"/>
</dbReference>
<dbReference type="Gene3D" id="3.30.1700.10">
    <property type="entry name" value="lpxc deacetylase, domain 2"/>
    <property type="match status" value="1"/>
</dbReference>
<dbReference type="HAMAP" id="MF_00388">
    <property type="entry name" value="LpxC"/>
    <property type="match status" value="1"/>
</dbReference>
<dbReference type="InterPro" id="IPR020568">
    <property type="entry name" value="Ribosomal_Su5_D2-typ_SF"/>
</dbReference>
<dbReference type="InterPro" id="IPR004463">
    <property type="entry name" value="UDP-acyl_GlcNac_deAcase"/>
</dbReference>
<dbReference type="InterPro" id="IPR011334">
    <property type="entry name" value="UDP-acyl_GlcNac_deAcase_C"/>
</dbReference>
<dbReference type="InterPro" id="IPR015870">
    <property type="entry name" value="UDP-acyl_N-AcGlcN_deAcase_N"/>
</dbReference>
<dbReference type="NCBIfam" id="TIGR00325">
    <property type="entry name" value="lpxC"/>
    <property type="match status" value="1"/>
</dbReference>
<dbReference type="PANTHER" id="PTHR33694">
    <property type="entry name" value="UDP-3-O-ACYL-N-ACETYLGLUCOSAMINE DEACETYLASE 1, MITOCHONDRIAL-RELATED"/>
    <property type="match status" value="1"/>
</dbReference>
<dbReference type="PANTHER" id="PTHR33694:SF1">
    <property type="entry name" value="UDP-3-O-ACYL-N-ACETYLGLUCOSAMINE DEACETYLASE 1, MITOCHONDRIAL-RELATED"/>
    <property type="match status" value="1"/>
</dbReference>
<dbReference type="Pfam" id="PF03331">
    <property type="entry name" value="LpxC"/>
    <property type="match status" value="1"/>
</dbReference>
<dbReference type="SUPFAM" id="SSF54211">
    <property type="entry name" value="Ribosomal protein S5 domain 2-like"/>
    <property type="match status" value="2"/>
</dbReference>
<reference key="1">
    <citation type="submission" date="2006-09" db="EMBL/GenBank/DDBJ databases">
        <authorList>
            <consortium name="The Klebsiella pneumonia Genome Sequencing Project"/>
            <person name="McClelland M."/>
            <person name="Sanderson E.K."/>
            <person name="Spieth J."/>
            <person name="Clifton W.S."/>
            <person name="Latreille P."/>
            <person name="Sabo A."/>
            <person name="Pepin K."/>
            <person name="Bhonagiri V."/>
            <person name="Porwollik S."/>
            <person name="Ali J."/>
            <person name="Wilson R.K."/>
        </authorList>
    </citation>
    <scope>NUCLEOTIDE SEQUENCE [LARGE SCALE GENOMIC DNA]</scope>
    <source>
        <strain>ATCC 700721 / MGH 78578</strain>
    </source>
</reference>
<protein>
    <recommendedName>
        <fullName evidence="1">UDP-3-O-acyl-N-acetylglucosamine deacetylase</fullName>
        <shortName evidence="1">UDP-3-O-acyl-GlcNAc deacetylase</shortName>
        <ecNumber evidence="1">3.5.1.108</ecNumber>
    </recommendedName>
    <alternativeName>
        <fullName evidence="1">UDP-3-O-[R-3-hydroxymyristoyl]-N-acetylglucosamine deacetylase</fullName>
    </alternativeName>
</protein>
<proteinExistence type="inferred from homology"/>
<accession>A6T4N9</accession>
<evidence type="ECO:0000255" key="1">
    <source>
        <dbReference type="HAMAP-Rule" id="MF_00388"/>
    </source>
</evidence>
<comment type="function">
    <text evidence="1">Catalyzes the hydrolysis of UDP-3-O-myristoyl-N-acetylglucosamine to form UDP-3-O-myristoylglucosamine and acetate, the committed step in lipid A biosynthesis.</text>
</comment>
<comment type="catalytic activity">
    <reaction evidence="1">
        <text>a UDP-3-O-[(3R)-3-hydroxyacyl]-N-acetyl-alpha-D-glucosamine + H2O = a UDP-3-O-[(3R)-3-hydroxyacyl]-alpha-D-glucosamine + acetate</text>
        <dbReference type="Rhea" id="RHEA:67816"/>
        <dbReference type="ChEBI" id="CHEBI:15377"/>
        <dbReference type="ChEBI" id="CHEBI:30089"/>
        <dbReference type="ChEBI" id="CHEBI:137740"/>
        <dbReference type="ChEBI" id="CHEBI:173225"/>
        <dbReference type="EC" id="3.5.1.108"/>
    </reaction>
</comment>
<comment type="cofactor">
    <cofactor evidence="1">
        <name>Zn(2+)</name>
        <dbReference type="ChEBI" id="CHEBI:29105"/>
    </cofactor>
</comment>
<comment type="pathway">
    <text evidence="1">Glycolipid biosynthesis; lipid IV(A) biosynthesis; lipid IV(A) from (3R)-3-hydroxytetradecanoyl-[acyl-carrier-protein] and UDP-N-acetyl-alpha-D-glucosamine: step 2/6.</text>
</comment>
<comment type="similarity">
    <text evidence="1">Belongs to the LpxC family.</text>
</comment>
<gene>
    <name evidence="1" type="primary">lpxC</name>
    <name type="ordered locus">KPN78578_00990</name>
    <name type="ORF">KPN_00100</name>
</gene>